<accession>A1ALW4</accession>
<keyword id="KW-1185">Reference proteome</keyword>
<keyword id="KW-0687">Ribonucleoprotein</keyword>
<keyword id="KW-0689">Ribosomal protein</keyword>
<keyword id="KW-0694">RNA-binding</keyword>
<keyword id="KW-0699">rRNA-binding</keyword>
<keyword id="KW-0820">tRNA-binding</keyword>
<reference key="1">
    <citation type="submission" date="2006-10" db="EMBL/GenBank/DDBJ databases">
        <title>Complete sequence of chromosome of Pelobacter propionicus DSM 2379.</title>
        <authorList>
            <consortium name="US DOE Joint Genome Institute"/>
            <person name="Copeland A."/>
            <person name="Lucas S."/>
            <person name="Lapidus A."/>
            <person name="Barry K."/>
            <person name="Detter J.C."/>
            <person name="Glavina del Rio T."/>
            <person name="Hammon N."/>
            <person name="Israni S."/>
            <person name="Dalin E."/>
            <person name="Tice H."/>
            <person name="Pitluck S."/>
            <person name="Saunders E."/>
            <person name="Brettin T."/>
            <person name="Bruce D."/>
            <person name="Han C."/>
            <person name="Tapia R."/>
            <person name="Schmutz J."/>
            <person name="Larimer F."/>
            <person name="Land M."/>
            <person name="Hauser L."/>
            <person name="Kyrpides N."/>
            <person name="Kim E."/>
            <person name="Lovley D."/>
            <person name="Richardson P."/>
        </authorList>
    </citation>
    <scope>NUCLEOTIDE SEQUENCE [LARGE SCALE GENOMIC DNA]</scope>
    <source>
        <strain>DSM 2379 / NBRC 103807 / OttBd1</strain>
    </source>
</reference>
<name>RS13_PELPD</name>
<proteinExistence type="inferred from homology"/>
<protein>
    <recommendedName>
        <fullName evidence="1">Small ribosomal subunit protein uS13</fullName>
    </recommendedName>
    <alternativeName>
        <fullName evidence="3">30S ribosomal protein S13</fullName>
    </alternativeName>
</protein>
<sequence>MARIAGIDLPKNKRIVIALTYIYGIGNSTAEKILEATNVDPNTRTDNLTEADVSHLRDEIDRNIKVEGDLRREISMNIKRLMDLGCYRGLRHRKGLPVRGQRTKTNARTRKGPARTVAGKKK</sequence>
<feature type="chain" id="PRO_0000306671" description="Small ribosomal subunit protein uS13">
    <location>
        <begin position="1"/>
        <end position="122"/>
    </location>
</feature>
<feature type="region of interest" description="Disordered" evidence="2">
    <location>
        <begin position="97"/>
        <end position="122"/>
    </location>
</feature>
<comment type="function">
    <text evidence="1">Located at the top of the head of the 30S subunit, it contacts several helices of the 16S rRNA. In the 70S ribosome it contacts the 23S rRNA (bridge B1a) and protein L5 of the 50S subunit (bridge B1b), connecting the 2 subunits; these bridges are implicated in subunit movement. Contacts the tRNAs in the A and P-sites.</text>
</comment>
<comment type="subunit">
    <text evidence="1">Part of the 30S ribosomal subunit. Forms a loose heterodimer with protein S19. Forms two bridges to the 50S subunit in the 70S ribosome.</text>
</comment>
<comment type="similarity">
    <text evidence="1">Belongs to the universal ribosomal protein uS13 family.</text>
</comment>
<gene>
    <name evidence="1" type="primary">rpsM</name>
    <name type="ordered locus">Ppro_0703</name>
</gene>
<dbReference type="EMBL" id="CP000482">
    <property type="protein sequence ID" value="ABK98334.1"/>
    <property type="molecule type" value="Genomic_DNA"/>
</dbReference>
<dbReference type="RefSeq" id="WP_011734646.1">
    <property type="nucleotide sequence ID" value="NC_008609.1"/>
</dbReference>
<dbReference type="SMR" id="A1ALW4"/>
<dbReference type="STRING" id="338966.Ppro_0703"/>
<dbReference type="KEGG" id="ppd:Ppro_0703"/>
<dbReference type="eggNOG" id="COG0099">
    <property type="taxonomic scope" value="Bacteria"/>
</dbReference>
<dbReference type="HOGENOM" id="CLU_103849_1_2_7"/>
<dbReference type="OrthoDB" id="9803610at2"/>
<dbReference type="Proteomes" id="UP000006732">
    <property type="component" value="Chromosome"/>
</dbReference>
<dbReference type="GO" id="GO:0005829">
    <property type="term" value="C:cytosol"/>
    <property type="evidence" value="ECO:0007669"/>
    <property type="project" value="TreeGrafter"/>
</dbReference>
<dbReference type="GO" id="GO:0015935">
    <property type="term" value="C:small ribosomal subunit"/>
    <property type="evidence" value="ECO:0007669"/>
    <property type="project" value="TreeGrafter"/>
</dbReference>
<dbReference type="GO" id="GO:0019843">
    <property type="term" value="F:rRNA binding"/>
    <property type="evidence" value="ECO:0007669"/>
    <property type="project" value="UniProtKB-UniRule"/>
</dbReference>
<dbReference type="GO" id="GO:0003735">
    <property type="term" value="F:structural constituent of ribosome"/>
    <property type="evidence" value="ECO:0007669"/>
    <property type="project" value="InterPro"/>
</dbReference>
<dbReference type="GO" id="GO:0000049">
    <property type="term" value="F:tRNA binding"/>
    <property type="evidence" value="ECO:0007669"/>
    <property type="project" value="UniProtKB-UniRule"/>
</dbReference>
<dbReference type="GO" id="GO:0006412">
    <property type="term" value="P:translation"/>
    <property type="evidence" value="ECO:0007669"/>
    <property type="project" value="UniProtKB-UniRule"/>
</dbReference>
<dbReference type="FunFam" id="1.10.8.50:FF:000001">
    <property type="entry name" value="30S ribosomal protein S13"/>
    <property type="match status" value="1"/>
</dbReference>
<dbReference type="FunFam" id="4.10.910.10:FF:000001">
    <property type="entry name" value="30S ribosomal protein S13"/>
    <property type="match status" value="1"/>
</dbReference>
<dbReference type="Gene3D" id="1.10.8.50">
    <property type="match status" value="1"/>
</dbReference>
<dbReference type="Gene3D" id="4.10.910.10">
    <property type="entry name" value="30s ribosomal protein s13, domain 2"/>
    <property type="match status" value="1"/>
</dbReference>
<dbReference type="HAMAP" id="MF_01315">
    <property type="entry name" value="Ribosomal_uS13"/>
    <property type="match status" value="1"/>
</dbReference>
<dbReference type="InterPro" id="IPR027437">
    <property type="entry name" value="Rbsml_uS13_C"/>
</dbReference>
<dbReference type="InterPro" id="IPR001892">
    <property type="entry name" value="Ribosomal_uS13"/>
</dbReference>
<dbReference type="InterPro" id="IPR010979">
    <property type="entry name" value="Ribosomal_uS13-like_H2TH"/>
</dbReference>
<dbReference type="InterPro" id="IPR019980">
    <property type="entry name" value="Ribosomal_uS13_bac-type"/>
</dbReference>
<dbReference type="InterPro" id="IPR018269">
    <property type="entry name" value="Ribosomal_uS13_CS"/>
</dbReference>
<dbReference type="NCBIfam" id="TIGR03631">
    <property type="entry name" value="uS13_bact"/>
    <property type="match status" value="1"/>
</dbReference>
<dbReference type="PANTHER" id="PTHR10871">
    <property type="entry name" value="30S RIBOSOMAL PROTEIN S13/40S RIBOSOMAL PROTEIN S18"/>
    <property type="match status" value="1"/>
</dbReference>
<dbReference type="PANTHER" id="PTHR10871:SF1">
    <property type="entry name" value="SMALL RIBOSOMAL SUBUNIT PROTEIN US13M"/>
    <property type="match status" value="1"/>
</dbReference>
<dbReference type="Pfam" id="PF00416">
    <property type="entry name" value="Ribosomal_S13"/>
    <property type="match status" value="1"/>
</dbReference>
<dbReference type="PIRSF" id="PIRSF002134">
    <property type="entry name" value="Ribosomal_S13"/>
    <property type="match status" value="1"/>
</dbReference>
<dbReference type="SUPFAM" id="SSF46946">
    <property type="entry name" value="S13-like H2TH domain"/>
    <property type="match status" value="1"/>
</dbReference>
<dbReference type="PROSITE" id="PS00646">
    <property type="entry name" value="RIBOSOMAL_S13_1"/>
    <property type="match status" value="1"/>
</dbReference>
<dbReference type="PROSITE" id="PS50159">
    <property type="entry name" value="RIBOSOMAL_S13_2"/>
    <property type="match status" value="1"/>
</dbReference>
<evidence type="ECO:0000255" key="1">
    <source>
        <dbReference type="HAMAP-Rule" id="MF_01315"/>
    </source>
</evidence>
<evidence type="ECO:0000256" key="2">
    <source>
        <dbReference type="SAM" id="MobiDB-lite"/>
    </source>
</evidence>
<evidence type="ECO:0000305" key="3"/>
<organism>
    <name type="scientific">Pelobacter propionicus (strain DSM 2379 / NBRC 103807 / OttBd1)</name>
    <dbReference type="NCBI Taxonomy" id="338966"/>
    <lineage>
        <taxon>Bacteria</taxon>
        <taxon>Pseudomonadati</taxon>
        <taxon>Thermodesulfobacteriota</taxon>
        <taxon>Desulfuromonadia</taxon>
        <taxon>Desulfuromonadales</taxon>
        <taxon>Desulfuromonadaceae</taxon>
        <taxon>Pelobacter</taxon>
    </lineage>
</organism>